<gene>
    <name type="primary">CYP19A3</name>
</gene>
<keyword id="KW-0349">Heme</keyword>
<keyword id="KW-0408">Iron</keyword>
<keyword id="KW-0472">Membrane</keyword>
<keyword id="KW-0479">Metal-binding</keyword>
<keyword id="KW-0503">Monooxygenase</keyword>
<keyword id="KW-0560">Oxidoreductase</keyword>
<keyword id="KW-1185">Reference proteome</keyword>
<accession>P79304</accession>
<dbReference type="EC" id="1.14.14.14" evidence="2"/>
<dbReference type="EMBL" id="U92246">
    <property type="protein sequence ID" value="AAB51388.1"/>
    <property type="molecule type" value="mRNA"/>
</dbReference>
<dbReference type="EMBL" id="AH006584">
    <property type="protein sequence ID" value="AAC48733.1"/>
    <property type="molecule type" value="Genomic_DNA"/>
</dbReference>
<dbReference type="RefSeq" id="NP_999596.1">
    <property type="nucleotide sequence ID" value="NM_214431.2"/>
</dbReference>
<dbReference type="SMR" id="P79304"/>
<dbReference type="FunCoup" id="P79304">
    <property type="interactions" value="40"/>
</dbReference>
<dbReference type="STRING" id="9823.ENSSSCP00000046988"/>
<dbReference type="PeptideAtlas" id="P79304"/>
<dbReference type="GeneID" id="403333"/>
<dbReference type="KEGG" id="ssc:403333"/>
<dbReference type="CTD" id="403333"/>
<dbReference type="InParanoid" id="P79304"/>
<dbReference type="OrthoDB" id="1470350at2759"/>
<dbReference type="BRENDA" id="1.14.14.14">
    <property type="organism ID" value="6170"/>
</dbReference>
<dbReference type="Proteomes" id="UP000008227">
    <property type="component" value="Unplaced"/>
</dbReference>
<dbReference type="Proteomes" id="UP000314985">
    <property type="component" value="Unplaced"/>
</dbReference>
<dbReference type="Proteomes" id="UP000694570">
    <property type="component" value="Unplaced"/>
</dbReference>
<dbReference type="Proteomes" id="UP000694571">
    <property type="component" value="Unplaced"/>
</dbReference>
<dbReference type="Proteomes" id="UP000694720">
    <property type="component" value="Unplaced"/>
</dbReference>
<dbReference type="Proteomes" id="UP000694722">
    <property type="component" value="Unplaced"/>
</dbReference>
<dbReference type="Proteomes" id="UP000694723">
    <property type="component" value="Unplaced"/>
</dbReference>
<dbReference type="Proteomes" id="UP000694724">
    <property type="component" value="Unplaced"/>
</dbReference>
<dbReference type="Proteomes" id="UP000694725">
    <property type="component" value="Unplaced"/>
</dbReference>
<dbReference type="Proteomes" id="UP000694726">
    <property type="component" value="Unplaced"/>
</dbReference>
<dbReference type="Proteomes" id="UP000694727">
    <property type="component" value="Unplaced"/>
</dbReference>
<dbReference type="Proteomes" id="UP000694728">
    <property type="component" value="Unplaced"/>
</dbReference>
<dbReference type="GO" id="GO:0005783">
    <property type="term" value="C:endoplasmic reticulum"/>
    <property type="evidence" value="ECO:0000318"/>
    <property type="project" value="GO_Central"/>
</dbReference>
<dbReference type="GO" id="GO:0016020">
    <property type="term" value="C:membrane"/>
    <property type="evidence" value="ECO:0007669"/>
    <property type="project" value="UniProtKB-SubCell"/>
</dbReference>
<dbReference type="GO" id="GO:0070330">
    <property type="term" value="F:aromatase activity"/>
    <property type="evidence" value="ECO:0000318"/>
    <property type="project" value="GO_Central"/>
</dbReference>
<dbReference type="GO" id="GO:0020037">
    <property type="term" value="F:heme binding"/>
    <property type="evidence" value="ECO:0007669"/>
    <property type="project" value="InterPro"/>
</dbReference>
<dbReference type="GO" id="GO:0005506">
    <property type="term" value="F:iron ion binding"/>
    <property type="evidence" value="ECO:0007669"/>
    <property type="project" value="InterPro"/>
</dbReference>
<dbReference type="GO" id="GO:0008585">
    <property type="term" value="P:female gonad development"/>
    <property type="evidence" value="ECO:0000318"/>
    <property type="project" value="GO_Central"/>
</dbReference>
<dbReference type="GO" id="GO:0032355">
    <property type="term" value="P:response to estradiol"/>
    <property type="evidence" value="ECO:0000318"/>
    <property type="project" value="GO_Central"/>
</dbReference>
<dbReference type="CDD" id="cd20616">
    <property type="entry name" value="CYP19A1"/>
    <property type="match status" value="1"/>
</dbReference>
<dbReference type="FunFam" id="1.10.630.10:FF:000032">
    <property type="entry name" value="Cytochrome P450 aromatase"/>
    <property type="match status" value="1"/>
</dbReference>
<dbReference type="Gene3D" id="1.10.630.10">
    <property type="entry name" value="Cytochrome P450"/>
    <property type="match status" value="1"/>
</dbReference>
<dbReference type="InterPro" id="IPR001128">
    <property type="entry name" value="Cyt_P450"/>
</dbReference>
<dbReference type="InterPro" id="IPR017972">
    <property type="entry name" value="Cyt_P450_CS"/>
</dbReference>
<dbReference type="InterPro" id="IPR002401">
    <property type="entry name" value="Cyt_P450_E_grp-I"/>
</dbReference>
<dbReference type="InterPro" id="IPR036396">
    <property type="entry name" value="Cyt_P450_sf"/>
</dbReference>
<dbReference type="InterPro" id="IPR050196">
    <property type="entry name" value="Cytochrome_P450_Monoox"/>
</dbReference>
<dbReference type="PANTHER" id="PTHR24291:SF43">
    <property type="entry name" value="AROMATASE"/>
    <property type="match status" value="1"/>
</dbReference>
<dbReference type="PANTHER" id="PTHR24291">
    <property type="entry name" value="CYTOCHROME P450 FAMILY 4"/>
    <property type="match status" value="1"/>
</dbReference>
<dbReference type="Pfam" id="PF00067">
    <property type="entry name" value="p450"/>
    <property type="match status" value="1"/>
</dbReference>
<dbReference type="PRINTS" id="PR00463">
    <property type="entry name" value="EP450I"/>
</dbReference>
<dbReference type="PRINTS" id="PR00385">
    <property type="entry name" value="P450"/>
</dbReference>
<dbReference type="SUPFAM" id="SSF48264">
    <property type="entry name" value="Cytochrome P450"/>
    <property type="match status" value="1"/>
</dbReference>
<dbReference type="PROSITE" id="PS00086">
    <property type="entry name" value="CYTOCHROME_P450"/>
    <property type="match status" value="1"/>
</dbReference>
<organism>
    <name type="scientific">Sus scrofa</name>
    <name type="common">Pig</name>
    <dbReference type="NCBI Taxonomy" id="9823"/>
    <lineage>
        <taxon>Eukaryota</taxon>
        <taxon>Metazoa</taxon>
        <taxon>Chordata</taxon>
        <taxon>Craniata</taxon>
        <taxon>Vertebrata</taxon>
        <taxon>Euteleostomi</taxon>
        <taxon>Mammalia</taxon>
        <taxon>Eutheria</taxon>
        <taxon>Laurasiatheria</taxon>
        <taxon>Artiodactyla</taxon>
        <taxon>Suina</taxon>
        <taxon>Suidae</taxon>
        <taxon>Sus</taxon>
    </lineage>
</organism>
<feature type="chain" id="PRO_0000051960" description="Aromatase 3">
    <location>
        <begin position="1"/>
        <end position="501"/>
    </location>
</feature>
<feature type="binding site" description="axial binding residue" evidence="1">
    <location>
        <position position="435"/>
    </location>
    <ligand>
        <name>heme</name>
        <dbReference type="ChEBI" id="CHEBI:30413"/>
    </ligand>
    <ligandPart>
        <name>Fe</name>
        <dbReference type="ChEBI" id="CHEBI:18248"/>
    </ligandPart>
</feature>
<sequence length="501" mass="57915">MVLEMLNPMNISSMVSEAVLFGSIAILLLIGLLLWVWNYEDTSSIPGPGYFLGIGPLISHFRFLWMGIGSACNYYNKMYGEFMRVWIGGEETLIISKSSSIFHIMKHNHYTCRFGSKLGLECIGMHEKGIMFNNNPALWKAVRPFFTKALSGPGLVRMVTVCADSITKHLDKLEEVRNDLGYVDVLTLMRRIMLDTSNNLFLGIPLDESALVHKVQGYFDAWQALLLKPDIFFKISWLYRKYEKSVKDLKDAMEILIEEKRHRISTAEKLEDSMDFTTQLIFAEKRGELTKENVNQCVLEMMIAAPDTMSITVFFMLFLIANHPQVEEELMKEIYTVVGERDIRNDDMQKLKVVENFIYESMRYQPVVDFVMRKALEDDVIDGYPVKKGTNIILNIGRMHRLEFFPKPNEFTLENFAKNVPYRYFQPFGFGPRACAGKYIAMVMMKVILVTLLRRFQVQTQQGQCVEKMQKKNDLSLHPHETSGLLEMIFIPRNSDKCLEH</sequence>
<protein>
    <recommendedName>
        <fullName>Aromatase 3</fullName>
        <ecNumber evidence="2">1.14.14.14</ecNumber>
    </recommendedName>
    <alternativeName>
        <fullName>CYPXIXA3</fullName>
    </alternativeName>
    <alternativeName>
        <fullName>Cytochrome P-450AROM</fullName>
    </alternativeName>
    <alternativeName>
        <fullName>Cytochrome P450 19 type III</fullName>
    </alternativeName>
    <alternativeName>
        <fullName>Estrogen synthase</fullName>
    </alternativeName>
</protein>
<proteinExistence type="evidence at transcript level"/>
<name>CP193_PIG</name>
<reference key="1">
    <citation type="journal article" date="1995" name="Mol. Cell. Endocrinol.">
        <title>Functional ovarian and placental isoforms of porcine aromatase.</title>
        <authorList>
            <person name="Corbin C.J."/>
            <person name="Khalil M.W."/>
            <person name="Conley A.J."/>
        </authorList>
    </citation>
    <scope>NUCLEOTIDE SEQUENCE</scope>
    <source>
        <tissue>Ovary</tissue>
    </source>
</reference>
<reference key="2">
    <citation type="journal article" date="1997" name="J. Steroid Biochem. Mol. Biol.">
        <title>Porcine aromatases: studies on tissue-specific, functionally distinct isozymes from a single gene?</title>
        <authorList>
            <person name="Conley A.J."/>
            <person name="Corbin C.J."/>
            <person name="Smith T."/>
            <person name="Hinshelwood M."/>
            <person name="Liu Z."/>
            <person name="Simpson E."/>
        </authorList>
    </citation>
    <scope>NUCLEOTIDE SEQUENCE</scope>
    <source>
        <tissue>Ovary</tissue>
    </source>
</reference>
<reference key="3">
    <citation type="journal article" date="1997" name="DNA Cell Biol.">
        <title>Closely related genes encode developmental and tissue isoforms of porcine cytochrome P450 aromatase.</title>
        <authorList>
            <person name="Choi I."/>
            <person name="Troyer D.L."/>
            <person name="Cornwell D.L."/>
            <person name="Kirby-Dobbels K.R."/>
            <person name="Collante W.R."/>
            <person name="Simmen F.A."/>
        </authorList>
    </citation>
    <scope>NUCLEOTIDE SEQUENCE OF 1-96</scope>
    <source>
        <tissue>Liver</tissue>
    </source>
</reference>
<comment type="function">
    <text>Catalyzes the formation of aromatic C18 estrogens from C19 androgens.</text>
</comment>
<comment type="catalytic activity">
    <reaction evidence="2">
        <text>testosterone + 3 reduced [NADPH--hemoprotein reductase] + 3 O2 = 17beta-estradiol + formate + 3 oxidized [NADPH--hemoprotein reductase] + 4 H2O + 4 H(+)</text>
        <dbReference type="Rhea" id="RHEA:38191"/>
        <dbReference type="Rhea" id="RHEA-COMP:11964"/>
        <dbReference type="Rhea" id="RHEA-COMP:11965"/>
        <dbReference type="ChEBI" id="CHEBI:15377"/>
        <dbReference type="ChEBI" id="CHEBI:15378"/>
        <dbReference type="ChEBI" id="CHEBI:15379"/>
        <dbReference type="ChEBI" id="CHEBI:15740"/>
        <dbReference type="ChEBI" id="CHEBI:16469"/>
        <dbReference type="ChEBI" id="CHEBI:17347"/>
        <dbReference type="ChEBI" id="CHEBI:57618"/>
        <dbReference type="ChEBI" id="CHEBI:58210"/>
        <dbReference type="EC" id="1.14.14.14"/>
    </reaction>
</comment>
<comment type="catalytic activity">
    <reaction evidence="2">
        <text>androst-4-ene-3,17-dione + 3 reduced [NADPH--hemoprotein reductase] + 3 O2 = estrone + formate + 3 oxidized [NADPH--hemoprotein reductase] + 4 H2O + 4 H(+)</text>
        <dbReference type="Rhea" id="RHEA:38195"/>
        <dbReference type="Rhea" id="RHEA-COMP:11964"/>
        <dbReference type="Rhea" id="RHEA-COMP:11965"/>
        <dbReference type="ChEBI" id="CHEBI:15377"/>
        <dbReference type="ChEBI" id="CHEBI:15378"/>
        <dbReference type="ChEBI" id="CHEBI:15379"/>
        <dbReference type="ChEBI" id="CHEBI:15740"/>
        <dbReference type="ChEBI" id="CHEBI:16422"/>
        <dbReference type="ChEBI" id="CHEBI:17263"/>
        <dbReference type="ChEBI" id="CHEBI:57618"/>
        <dbReference type="ChEBI" id="CHEBI:58210"/>
        <dbReference type="EC" id="1.14.14.14"/>
    </reaction>
</comment>
<comment type="cofactor">
    <cofactor evidence="1">
        <name>heme</name>
        <dbReference type="ChEBI" id="CHEBI:30413"/>
    </cofactor>
</comment>
<comment type="subcellular location">
    <subcellularLocation>
        <location>Membrane</location>
        <topology>Peripheral membrane protein</topology>
    </subcellularLocation>
</comment>
<comment type="tissue specificity">
    <text>Ovary.</text>
</comment>
<comment type="similarity">
    <text evidence="3">Belongs to the cytochrome P450 family.</text>
</comment>
<evidence type="ECO:0000250" key="1"/>
<evidence type="ECO:0000250" key="2">
    <source>
        <dbReference type="UniProtKB" id="P11511"/>
    </source>
</evidence>
<evidence type="ECO:0000305" key="3"/>